<reference key="1">
    <citation type="journal article" date="1996" name="Microbiology">
        <title>Sequencing of a 65 kb region of the Bacillus subtilis genome containing the lic and cel loci, and creation of a 177 kb contig covering the gnt-sacXY region.</title>
        <authorList>
            <person name="Yoshida K."/>
            <person name="Shindo K."/>
            <person name="Sano H."/>
            <person name="Seki S."/>
            <person name="Fujimura M."/>
            <person name="Yanai N."/>
            <person name="Miwa Y."/>
            <person name="Fujita Y."/>
        </authorList>
    </citation>
    <scope>NUCLEOTIDE SEQUENCE [GENOMIC DNA]</scope>
    <source>
        <strain>168 / BGSC1A1</strain>
    </source>
</reference>
<reference key="2">
    <citation type="journal article" date="1997" name="Nature">
        <title>The complete genome sequence of the Gram-positive bacterium Bacillus subtilis.</title>
        <authorList>
            <person name="Kunst F."/>
            <person name="Ogasawara N."/>
            <person name="Moszer I."/>
            <person name="Albertini A.M."/>
            <person name="Alloni G."/>
            <person name="Azevedo V."/>
            <person name="Bertero M.G."/>
            <person name="Bessieres P."/>
            <person name="Bolotin A."/>
            <person name="Borchert S."/>
            <person name="Borriss R."/>
            <person name="Boursier L."/>
            <person name="Brans A."/>
            <person name="Braun M."/>
            <person name="Brignell S.C."/>
            <person name="Bron S."/>
            <person name="Brouillet S."/>
            <person name="Bruschi C.V."/>
            <person name="Caldwell B."/>
            <person name="Capuano V."/>
            <person name="Carter N.M."/>
            <person name="Choi S.-K."/>
            <person name="Codani J.-J."/>
            <person name="Connerton I.F."/>
            <person name="Cummings N.J."/>
            <person name="Daniel R.A."/>
            <person name="Denizot F."/>
            <person name="Devine K.M."/>
            <person name="Duesterhoeft A."/>
            <person name="Ehrlich S.D."/>
            <person name="Emmerson P.T."/>
            <person name="Entian K.-D."/>
            <person name="Errington J."/>
            <person name="Fabret C."/>
            <person name="Ferrari E."/>
            <person name="Foulger D."/>
            <person name="Fritz C."/>
            <person name="Fujita M."/>
            <person name="Fujita Y."/>
            <person name="Fuma S."/>
            <person name="Galizzi A."/>
            <person name="Galleron N."/>
            <person name="Ghim S.-Y."/>
            <person name="Glaser P."/>
            <person name="Goffeau A."/>
            <person name="Golightly E.J."/>
            <person name="Grandi G."/>
            <person name="Guiseppi G."/>
            <person name="Guy B.J."/>
            <person name="Haga K."/>
            <person name="Haiech J."/>
            <person name="Harwood C.R."/>
            <person name="Henaut A."/>
            <person name="Hilbert H."/>
            <person name="Holsappel S."/>
            <person name="Hosono S."/>
            <person name="Hullo M.-F."/>
            <person name="Itaya M."/>
            <person name="Jones L.-M."/>
            <person name="Joris B."/>
            <person name="Karamata D."/>
            <person name="Kasahara Y."/>
            <person name="Klaerr-Blanchard M."/>
            <person name="Klein C."/>
            <person name="Kobayashi Y."/>
            <person name="Koetter P."/>
            <person name="Koningstein G."/>
            <person name="Krogh S."/>
            <person name="Kumano M."/>
            <person name="Kurita K."/>
            <person name="Lapidus A."/>
            <person name="Lardinois S."/>
            <person name="Lauber J."/>
            <person name="Lazarevic V."/>
            <person name="Lee S.-M."/>
            <person name="Levine A."/>
            <person name="Liu H."/>
            <person name="Masuda S."/>
            <person name="Mauel C."/>
            <person name="Medigue C."/>
            <person name="Medina N."/>
            <person name="Mellado R.P."/>
            <person name="Mizuno M."/>
            <person name="Moestl D."/>
            <person name="Nakai S."/>
            <person name="Noback M."/>
            <person name="Noone D."/>
            <person name="O'Reilly M."/>
            <person name="Ogawa K."/>
            <person name="Ogiwara A."/>
            <person name="Oudega B."/>
            <person name="Park S.-H."/>
            <person name="Parro V."/>
            <person name="Pohl T.M."/>
            <person name="Portetelle D."/>
            <person name="Porwollik S."/>
            <person name="Prescott A.M."/>
            <person name="Presecan E."/>
            <person name="Pujic P."/>
            <person name="Purnelle B."/>
            <person name="Rapoport G."/>
            <person name="Rey M."/>
            <person name="Reynolds S."/>
            <person name="Rieger M."/>
            <person name="Rivolta C."/>
            <person name="Rocha E."/>
            <person name="Roche B."/>
            <person name="Rose M."/>
            <person name="Sadaie Y."/>
            <person name="Sato T."/>
            <person name="Scanlan E."/>
            <person name="Schleich S."/>
            <person name="Schroeter R."/>
            <person name="Scoffone F."/>
            <person name="Sekiguchi J."/>
            <person name="Sekowska A."/>
            <person name="Seror S.J."/>
            <person name="Serror P."/>
            <person name="Shin B.-S."/>
            <person name="Soldo B."/>
            <person name="Sorokin A."/>
            <person name="Tacconi E."/>
            <person name="Takagi T."/>
            <person name="Takahashi H."/>
            <person name="Takemaru K."/>
            <person name="Takeuchi M."/>
            <person name="Tamakoshi A."/>
            <person name="Tanaka T."/>
            <person name="Terpstra P."/>
            <person name="Tognoni A."/>
            <person name="Tosato V."/>
            <person name="Uchiyama S."/>
            <person name="Vandenbol M."/>
            <person name="Vannier F."/>
            <person name="Vassarotti A."/>
            <person name="Viari A."/>
            <person name="Wambutt R."/>
            <person name="Wedler E."/>
            <person name="Wedler H."/>
            <person name="Weitzenegger T."/>
            <person name="Winters P."/>
            <person name="Wipat A."/>
            <person name="Yamamoto H."/>
            <person name="Yamane K."/>
            <person name="Yasumoto K."/>
            <person name="Yata K."/>
            <person name="Yoshida K."/>
            <person name="Yoshikawa H.-F."/>
            <person name="Zumstein E."/>
            <person name="Yoshikawa H."/>
            <person name="Danchin A."/>
        </authorList>
    </citation>
    <scope>NUCLEOTIDE SEQUENCE [LARGE SCALE GENOMIC DNA]</scope>
    <source>
        <strain>168</strain>
    </source>
</reference>
<name>YXJB_BACSU</name>
<keyword id="KW-0479">Metal-binding</keyword>
<keyword id="KW-0489">Methyltransferase</keyword>
<keyword id="KW-1185">Reference proteome</keyword>
<keyword id="KW-0949">S-adenosyl-L-methionine</keyword>
<keyword id="KW-0808">Transferase</keyword>
<keyword id="KW-0862">Zinc</keyword>
<dbReference type="EC" id="2.1.1.-"/>
<dbReference type="EMBL" id="D83026">
    <property type="protein sequence ID" value="BAA11703.1"/>
    <property type="molecule type" value="Genomic_DNA"/>
</dbReference>
<dbReference type="EMBL" id="AL009126">
    <property type="protein sequence ID" value="CAB15927.1"/>
    <property type="molecule type" value="Genomic_DNA"/>
</dbReference>
<dbReference type="PIR" id="H70078">
    <property type="entry name" value="H70078"/>
</dbReference>
<dbReference type="RefSeq" id="WP_003243947.1">
    <property type="nucleotide sequence ID" value="NZ_OZ025638.1"/>
</dbReference>
<dbReference type="SMR" id="P42313"/>
<dbReference type="FunCoup" id="P42313">
    <property type="interactions" value="42"/>
</dbReference>
<dbReference type="STRING" id="224308.BSU39010"/>
<dbReference type="PaxDb" id="224308-BSU39010"/>
<dbReference type="EnsemblBacteria" id="CAB15927">
    <property type="protein sequence ID" value="CAB15927"/>
    <property type="gene ID" value="BSU_39010"/>
</dbReference>
<dbReference type="GeneID" id="937456"/>
<dbReference type="KEGG" id="bsu:BSU39010"/>
<dbReference type="PATRIC" id="fig|224308.179.peg.4222"/>
<dbReference type="eggNOG" id="COG0500">
    <property type="taxonomic scope" value="Bacteria"/>
</dbReference>
<dbReference type="InParanoid" id="P42313"/>
<dbReference type="OrthoDB" id="5522265at2"/>
<dbReference type="PhylomeDB" id="P42313"/>
<dbReference type="BioCyc" id="BSUB:BSU39010-MONOMER"/>
<dbReference type="Proteomes" id="UP000001570">
    <property type="component" value="Chromosome"/>
</dbReference>
<dbReference type="GO" id="GO:0046872">
    <property type="term" value="F:metal ion binding"/>
    <property type="evidence" value="ECO:0007669"/>
    <property type="project" value="UniProtKB-KW"/>
</dbReference>
<dbReference type="GO" id="GO:0008168">
    <property type="term" value="F:methyltransferase activity"/>
    <property type="evidence" value="ECO:0000318"/>
    <property type="project" value="GO_Central"/>
</dbReference>
<dbReference type="GO" id="GO:0032259">
    <property type="term" value="P:methylation"/>
    <property type="evidence" value="ECO:0007669"/>
    <property type="project" value="UniProtKB-KW"/>
</dbReference>
<dbReference type="CDD" id="cd02440">
    <property type="entry name" value="AdoMet_MTases"/>
    <property type="match status" value="1"/>
</dbReference>
<dbReference type="Gene3D" id="3.40.50.150">
    <property type="entry name" value="Vaccinia Virus protein VP39"/>
    <property type="match status" value="1"/>
</dbReference>
<dbReference type="InterPro" id="IPR052939">
    <property type="entry name" value="23S_rRNA_MeTrnsfrase_RlmA"/>
</dbReference>
<dbReference type="InterPro" id="IPR041698">
    <property type="entry name" value="Methyltransf_25"/>
</dbReference>
<dbReference type="InterPro" id="IPR048647">
    <property type="entry name" value="RlmA_N"/>
</dbReference>
<dbReference type="InterPro" id="IPR016718">
    <property type="entry name" value="rRNA_m1G-MeTrfase_A_prd"/>
</dbReference>
<dbReference type="InterPro" id="IPR029063">
    <property type="entry name" value="SAM-dependent_MTases_sf"/>
</dbReference>
<dbReference type="PANTHER" id="PTHR43460">
    <property type="entry name" value="METHYLTRANSFERASE"/>
    <property type="match status" value="1"/>
</dbReference>
<dbReference type="PANTHER" id="PTHR43460:SF1">
    <property type="entry name" value="METHYLTRANSFERASE TYPE 11 DOMAIN-CONTAINING PROTEIN"/>
    <property type="match status" value="1"/>
</dbReference>
<dbReference type="Pfam" id="PF13649">
    <property type="entry name" value="Methyltransf_25"/>
    <property type="match status" value="1"/>
</dbReference>
<dbReference type="Pfam" id="PF21302">
    <property type="entry name" value="Zn_ribbon_RlmA"/>
    <property type="match status" value="1"/>
</dbReference>
<dbReference type="PIRSF" id="PIRSF018249">
    <property type="entry name" value="MyrA_prd"/>
    <property type="match status" value="1"/>
</dbReference>
<dbReference type="SUPFAM" id="SSF53335">
    <property type="entry name" value="S-adenosyl-L-methionine-dependent methyltransferases"/>
    <property type="match status" value="1"/>
</dbReference>
<gene>
    <name type="primary">yxjB</name>
    <name type="ordered locus">BSU39010</name>
    <name type="ORF">N15I</name>
</gene>
<evidence type="ECO:0000250" key="1"/>
<evidence type="ECO:0000305" key="2"/>
<accession>P42313</accession>
<feature type="chain" id="PRO_0000050033" description="Putative 23S rRNA (guanine-N(1)-)-methyltransferase YxjB">
    <location>
        <begin position="1"/>
        <end position="282"/>
    </location>
</feature>
<feature type="binding site" evidence="1">
    <location>
        <position position="12"/>
    </location>
    <ligand>
        <name>Zn(2+)</name>
        <dbReference type="ChEBI" id="CHEBI:29105"/>
    </ligand>
</feature>
<feature type="binding site" evidence="1">
    <location>
        <position position="15"/>
    </location>
    <ligand>
        <name>Zn(2+)</name>
        <dbReference type="ChEBI" id="CHEBI:29105"/>
    </ligand>
</feature>
<feature type="binding site" evidence="1">
    <location>
        <position position="29"/>
    </location>
    <ligand>
        <name>Zn(2+)</name>
        <dbReference type="ChEBI" id="CHEBI:29105"/>
    </ligand>
</feature>
<feature type="binding site" evidence="1">
    <location>
        <position position="34"/>
    </location>
    <ligand>
        <name>Zn(2+)</name>
        <dbReference type="ChEBI" id="CHEBI:29105"/>
    </ligand>
</feature>
<feature type="binding site">
    <location>
        <begin position="103"/>
        <end position="104"/>
    </location>
    <ligand>
        <name>S-adenosyl-L-methionine</name>
        <dbReference type="ChEBI" id="CHEBI:59789"/>
    </ligand>
</feature>
<organism>
    <name type="scientific">Bacillus subtilis (strain 168)</name>
    <dbReference type="NCBI Taxonomy" id="224308"/>
    <lineage>
        <taxon>Bacteria</taxon>
        <taxon>Bacillati</taxon>
        <taxon>Bacillota</taxon>
        <taxon>Bacilli</taxon>
        <taxon>Bacillales</taxon>
        <taxon>Bacillaceae</taxon>
        <taxon>Bacillus</taxon>
    </lineage>
</organism>
<sequence>MKRTVDFSMFRCPLCDSSMDAASGKSLICTERGHTFDLSRHGYVNFLTKPVKTSYGAELFEARSRLIGECGFFDPLHDAIAELISHPKSGHEAFTILDSGCGEGSHLNALCGFDYAGKAAIGTGIDLSKDGILKASKAFKDLMWAVADVARAPFHDRQFDVVLSIFSPSNYAEFHRLLKNDGMLIKVVPRSDYLIELRQFLYTDSPRRTYSNTAAVERFTANAAHSRPVRLRYVKTLDQQAIHWLLKMTPLAWSAPKDRVSLLKEMKSADITVDVDILIGMK</sequence>
<protein>
    <recommendedName>
        <fullName>Putative 23S rRNA (guanine-N(1)-)-methyltransferase YxjB</fullName>
        <ecNumber>2.1.1.-</ecNumber>
    </recommendedName>
</protein>
<comment type="similarity">
    <text evidence="2">Belongs to the methyltransferase superfamily. RlmA family.</text>
</comment>
<proteinExistence type="inferred from homology"/>